<comment type="function">
    <text evidence="2">GTP hydrolase that promotes the GTP-dependent binding of aminoacyl-tRNA to the A-site of ribosomes during protein biosynthesis.</text>
</comment>
<comment type="catalytic activity">
    <reaction evidence="2">
        <text>GTP + H2O = GDP + phosphate + H(+)</text>
        <dbReference type="Rhea" id="RHEA:19669"/>
        <dbReference type="ChEBI" id="CHEBI:15377"/>
        <dbReference type="ChEBI" id="CHEBI:15378"/>
        <dbReference type="ChEBI" id="CHEBI:37565"/>
        <dbReference type="ChEBI" id="CHEBI:43474"/>
        <dbReference type="ChEBI" id="CHEBI:58189"/>
        <dbReference type="EC" id="3.6.5.3"/>
    </reaction>
    <physiologicalReaction direction="left-to-right" evidence="2">
        <dbReference type="Rhea" id="RHEA:19670"/>
    </physiologicalReaction>
</comment>
<comment type="subunit">
    <text evidence="2">Monomer.</text>
</comment>
<comment type="subcellular location">
    <subcellularLocation>
        <location evidence="2">Cytoplasm</location>
    </subcellularLocation>
</comment>
<comment type="similarity">
    <text evidence="2">Belongs to the TRAFAC class translation factor GTPase superfamily. Classic translation factor GTPase family. EF-Tu/EF-1A subfamily.</text>
</comment>
<protein>
    <recommendedName>
        <fullName evidence="2">Elongation factor Tu 2</fullName>
        <shortName evidence="2">EF-Tu 2</shortName>
        <ecNumber evidence="2">3.6.5.3</ecNumber>
    </recommendedName>
</protein>
<accession>Q3A6P9</accession>
<organism>
    <name type="scientific">Syntrophotalea carbinolica (strain DSM 2380 / NBRC 103641 / GraBd1)</name>
    <name type="common">Pelobacter carbinolicus</name>
    <dbReference type="NCBI Taxonomy" id="338963"/>
    <lineage>
        <taxon>Bacteria</taxon>
        <taxon>Pseudomonadati</taxon>
        <taxon>Thermodesulfobacteriota</taxon>
        <taxon>Desulfuromonadia</taxon>
        <taxon>Desulfuromonadales</taxon>
        <taxon>Syntrophotaleaceae</taxon>
        <taxon>Syntrophotalea</taxon>
    </lineage>
</organism>
<sequence length="399" mass="43612">MSKAKFERTKPHVNIGTIGHVDHGKTTLTAAITQTMAARGLAEFKAFDQIDNAPEERERGITIATAHVEYQTDTRHYAHVDCPGHADYVKNMITGAAQMDGAILVVSAADGPMPQTREHILLARQVGVPAMVVFLNKADMVDDEELMELVELEVRELLSSYDFPGDDIPIVAGSALKALECGCGKDDCDACKPIIELMNQVDGYIPEPERDIDKPFLMPVEDVFSISGRGTVATGRVERGIVCVQDEIEIVGMKETTKTVVTGVEMFRKLLDQGQAGDNIGVLLRGVKREDIERGQVLAKPGSITPHTKFKAEAYILTKEEGGRHTPFFNGYRPQFYFRTTDVTGICELAEGTEMVMPGDNASMTVNLITPIAMDKELRFAIREGGRTVGAGVVSDIIE</sequence>
<gene>
    <name evidence="2" type="primary">tuf2</name>
    <name type="synonym">tufA</name>
    <name type="ordered locus">Pcar_0699</name>
</gene>
<feature type="chain" id="PRO_0000337456" description="Elongation factor Tu 2">
    <location>
        <begin position="1"/>
        <end position="399"/>
    </location>
</feature>
<feature type="domain" description="tr-type G">
    <location>
        <begin position="10"/>
        <end position="209"/>
    </location>
</feature>
<feature type="region of interest" description="G1" evidence="1">
    <location>
        <begin position="19"/>
        <end position="26"/>
    </location>
</feature>
<feature type="region of interest" description="G2" evidence="1">
    <location>
        <begin position="60"/>
        <end position="64"/>
    </location>
</feature>
<feature type="region of interest" description="G3" evidence="1">
    <location>
        <begin position="81"/>
        <end position="84"/>
    </location>
</feature>
<feature type="region of interest" description="G4" evidence="1">
    <location>
        <begin position="136"/>
        <end position="139"/>
    </location>
</feature>
<feature type="region of interest" description="G5" evidence="1">
    <location>
        <begin position="174"/>
        <end position="176"/>
    </location>
</feature>
<feature type="binding site" evidence="2">
    <location>
        <begin position="19"/>
        <end position="26"/>
    </location>
    <ligand>
        <name>GTP</name>
        <dbReference type="ChEBI" id="CHEBI:37565"/>
    </ligand>
</feature>
<feature type="binding site" evidence="2">
    <location>
        <position position="26"/>
    </location>
    <ligand>
        <name>Mg(2+)</name>
        <dbReference type="ChEBI" id="CHEBI:18420"/>
    </ligand>
</feature>
<feature type="binding site" evidence="2">
    <location>
        <begin position="81"/>
        <end position="85"/>
    </location>
    <ligand>
        <name>GTP</name>
        <dbReference type="ChEBI" id="CHEBI:37565"/>
    </ligand>
</feature>
<feature type="binding site" evidence="2">
    <location>
        <begin position="136"/>
        <end position="139"/>
    </location>
    <ligand>
        <name>GTP</name>
        <dbReference type="ChEBI" id="CHEBI:37565"/>
    </ligand>
</feature>
<dbReference type="EC" id="3.6.5.3" evidence="2"/>
<dbReference type="EMBL" id="CP000142">
    <property type="protein sequence ID" value="ABA87958.1"/>
    <property type="molecule type" value="Genomic_DNA"/>
</dbReference>
<dbReference type="RefSeq" id="WP_011340401.1">
    <property type="nucleotide sequence ID" value="NC_007498.2"/>
</dbReference>
<dbReference type="SMR" id="Q3A6P9"/>
<dbReference type="STRING" id="338963.Pcar_0699"/>
<dbReference type="KEGG" id="pca:Pcar_0699"/>
<dbReference type="eggNOG" id="COG0050">
    <property type="taxonomic scope" value="Bacteria"/>
</dbReference>
<dbReference type="HOGENOM" id="CLU_007265_0_0_7"/>
<dbReference type="OrthoDB" id="9803139at2"/>
<dbReference type="Proteomes" id="UP000002534">
    <property type="component" value="Chromosome"/>
</dbReference>
<dbReference type="GO" id="GO:0005829">
    <property type="term" value="C:cytosol"/>
    <property type="evidence" value="ECO:0007669"/>
    <property type="project" value="TreeGrafter"/>
</dbReference>
<dbReference type="GO" id="GO:0005525">
    <property type="term" value="F:GTP binding"/>
    <property type="evidence" value="ECO:0007669"/>
    <property type="project" value="UniProtKB-UniRule"/>
</dbReference>
<dbReference type="GO" id="GO:0003924">
    <property type="term" value="F:GTPase activity"/>
    <property type="evidence" value="ECO:0007669"/>
    <property type="project" value="InterPro"/>
</dbReference>
<dbReference type="GO" id="GO:0003746">
    <property type="term" value="F:translation elongation factor activity"/>
    <property type="evidence" value="ECO:0007669"/>
    <property type="project" value="UniProtKB-UniRule"/>
</dbReference>
<dbReference type="CDD" id="cd01884">
    <property type="entry name" value="EF_Tu"/>
    <property type="match status" value="1"/>
</dbReference>
<dbReference type="CDD" id="cd03697">
    <property type="entry name" value="EFTU_II"/>
    <property type="match status" value="1"/>
</dbReference>
<dbReference type="CDD" id="cd03707">
    <property type="entry name" value="EFTU_III"/>
    <property type="match status" value="1"/>
</dbReference>
<dbReference type="FunFam" id="2.40.30.10:FF:000001">
    <property type="entry name" value="Elongation factor Tu"/>
    <property type="match status" value="1"/>
</dbReference>
<dbReference type="FunFam" id="3.40.50.300:FF:000003">
    <property type="entry name" value="Elongation factor Tu"/>
    <property type="match status" value="1"/>
</dbReference>
<dbReference type="Gene3D" id="3.40.50.300">
    <property type="entry name" value="P-loop containing nucleotide triphosphate hydrolases"/>
    <property type="match status" value="1"/>
</dbReference>
<dbReference type="Gene3D" id="2.40.30.10">
    <property type="entry name" value="Translation factors"/>
    <property type="match status" value="2"/>
</dbReference>
<dbReference type="HAMAP" id="MF_00118_B">
    <property type="entry name" value="EF_Tu_B"/>
    <property type="match status" value="1"/>
</dbReference>
<dbReference type="InterPro" id="IPR041709">
    <property type="entry name" value="EF-Tu_GTP-bd"/>
</dbReference>
<dbReference type="InterPro" id="IPR050055">
    <property type="entry name" value="EF-Tu_GTPase"/>
</dbReference>
<dbReference type="InterPro" id="IPR004161">
    <property type="entry name" value="EFTu-like_2"/>
</dbReference>
<dbReference type="InterPro" id="IPR033720">
    <property type="entry name" value="EFTU_2"/>
</dbReference>
<dbReference type="InterPro" id="IPR031157">
    <property type="entry name" value="G_TR_CS"/>
</dbReference>
<dbReference type="InterPro" id="IPR027417">
    <property type="entry name" value="P-loop_NTPase"/>
</dbReference>
<dbReference type="InterPro" id="IPR005225">
    <property type="entry name" value="Small_GTP-bd"/>
</dbReference>
<dbReference type="InterPro" id="IPR000795">
    <property type="entry name" value="T_Tr_GTP-bd_dom"/>
</dbReference>
<dbReference type="InterPro" id="IPR009000">
    <property type="entry name" value="Transl_B-barrel_sf"/>
</dbReference>
<dbReference type="InterPro" id="IPR009001">
    <property type="entry name" value="Transl_elong_EF1A/Init_IF2_C"/>
</dbReference>
<dbReference type="InterPro" id="IPR004541">
    <property type="entry name" value="Transl_elong_EFTu/EF1A_bac/org"/>
</dbReference>
<dbReference type="InterPro" id="IPR004160">
    <property type="entry name" value="Transl_elong_EFTu/EF1A_C"/>
</dbReference>
<dbReference type="NCBIfam" id="TIGR00485">
    <property type="entry name" value="EF-Tu"/>
    <property type="match status" value="1"/>
</dbReference>
<dbReference type="NCBIfam" id="NF000766">
    <property type="entry name" value="PRK00049.1"/>
    <property type="match status" value="1"/>
</dbReference>
<dbReference type="NCBIfam" id="NF009372">
    <property type="entry name" value="PRK12735.1"/>
    <property type="match status" value="1"/>
</dbReference>
<dbReference type="NCBIfam" id="NF009373">
    <property type="entry name" value="PRK12736.1"/>
    <property type="match status" value="1"/>
</dbReference>
<dbReference type="NCBIfam" id="TIGR00231">
    <property type="entry name" value="small_GTP"/>
    <property type="match status" value="1"/>
</dbReference>
<dbReference type="PANTHER" id="PTHR43721:SF22">
    <property type="entry name" value="ELONGATION FACTOR TU, MITOCHONDRIAL"/>
    <property type="match status" value="1"/>
</dbReference>
<dbReference type="PANTHER" id="PTHR43721">
    <property type="entry name" value="ELONGATION FACTOR TU-RELATED"/>
    <property type="match status" value="1"/>
</dbReference>
<dbReference type="Pfam" id="PF00009">
    <property type="entry name" value="GTP_EFTU"/>
    <property type="match status" value="1"/>
</dbReference>
<dbReference type="Pfam" id="PF03144">
    <property type="entry name" value="GTP_EFTU_D2"/>
    <property type="match status" value="1"/>
</dbReference>
<dbReference type="Pfam" id="PF03143">
    <property type="entry name" value="GTP_EFTU_D3"/>
    <property type="match status" value="1"/>
</dbReference>
<dbReference type="PRINTS" id="PR00315">
    <property type="entry name" value="ELONGATNFCT"/>
</dbReference>
<dbReference type="SUPFAM" id="SSF50465">
    <property type="entry name" value="EF-Tu/eEF-1alpha/eIF2-gamma C-terminal domain"/>
    <property type="match status" value="1"/>
</dbReference>
<dbReference type="SUPFAM" id="SSF52540">
    <property type="entry name" value="P-loop containing nucleoside triphosphate hydrolases"/>
    <property type="match status" value="1"/>
</dbReference>
<dbReference type="SUPFAM" id="SSF50447">
    <property type="entry name" value="Translation proteins"/>
    <property type="match status" value="1"/>
</dbReference>
<dbReference type="PROSITE" id="PS00301">
    <property type="entry name" value="G_TR_1"/>
    <property type="match status" value="1"/>
</dbReference>
<dbReference type="PROSITE" id="PS51722">
    <property type="entry name" value="G_TR_2"/>
    <property type="match status" value="1"/>
</dbReference>
<proteinExistence type="inferred from homology"/>
<keyword id="KW-0963">Cytoplasm</keyword>
<keyword id="KW-0251">Elongation factor</keyword>
<keyword id="KW-0342">GTP-binding</keyword>
<keyword id="KW-0378">Hydrolase</keyword>
<keyword id="KW-0460">Magnesium</keyword>
<keyword id="KW-0479">Metal-binding</keyword>
<keyword id="KW-0547">Nucleotide-binding</keyword>
<keyword id="KW-0648">Protein biosynthesis</keyword>
<keyword id="KW-1185">Reference proteome</keyword>
<name>EFTU2_SYNC1</name>
<evidence type="ECO:0000250" key="1"/>
<evidence type="ECO:0000255" key="2">
    <source>
        <dbReference type="HAMAP-Rule" id="MF_00118"/>
    </source>
</evidence>
<reference key="1">
    <citation type="submission" date="2005-10" db="EMBL/GenBank/DDBJ databases">
        <title>Complete sequence of Pelobacter carbinolicus DSM 2380.</title>
        <authorList>
            <person name="Copeland A."/>
            <person name="Lucas S."/>
            <person name="Lapidus A."/>
            <person name="Barry K."/>
            <person name="Detter J.C."/>
            <person name="Glavina T."/>
            <person name="Hammon N."/>
            <person name="Israni S."/>
            <person name="Pitluck S."/>
            <person name="Chertkov O."/>
            <person name="Schmutz J."/>
            <person name="Larimer F."/>
            <person name="Land M."/>
            <person name="Kyrpides N."/>
            <person name="Ivanova N."/>
            <person name="Richardson P."/>
        </authorList>
    </citation>
    <scope>NUCLEOTIDE SEQUENCE [LARGE SCALE GENOMIC DNA]</scope>
    <source>
        <strain>DSM 2380 / NBRC 103641 / GraBd1</strain>
    </source>
</reference>